<organism>
    <name type="scientific">Pectobacterium carotovorum subsp. carotovorum (strain PC1)</name>
    <dbReference type="NCBI Taxonomy" id="561230"/>
    <lineage>
        <taxon>Bacteria</taxon>
        <taxon>Pseudomonadati</taxon>
        <taxon>Pseudomonadota</taxon>
        <taxon>Gammaproteobacteria</taxon>
        <taxon>Enterobacterales</taxon>
        <taxon>Pectobacteriaceae</taxon>
        <taxon>Pectobacterium</taxon>
    </lineage>
</organism>
<protein>
    <recommendedName>
        <fullName evidence="1">Small ribosomal subunit protein uS17</fullName>
    </recommendedName>
    <alternativeName>
        <fullName evidence="2">30S ribosomal protein S17</fullName>
    </alternativeName>
</protein>
<evidence type="ECO:0000255" key="1">
    <source>
        <dbReference type="HAMAP-Rule" id="MF_01345"/>
    </source>
</evidence>
<evidence type="ECO:0000305" key="2"/>
<name>RS17_PECCP</name>
<reference key="1">
    <citation type="submission" date="2009-07" db="EMBL/GenBank/DDBJ databases">
        <title>Complete sequence of Pectobacterium carotovorum subsp. carotovorum PC1.</title>
        <authorList>
            <consortium name="US DOE Joint Genome Institute"/>
            <person name="Lucas S."/>
            <person name="Copeland A."/>
            <person name="Lapidus A."/>
            <person name="Glavina del Rio T."/>
            <person name="Tice H."/>
            <person name="Bruce D."/>
            <person name="Goodwin L."/>
            <person name="Pitluck S."/>
            <person name="Munk A.C."/>
            <person name="Brettin T."/>
            <person name="Detter J.C."/>
            <person name="Han C."/>
            <person name="Tapia R."/>
            <person name="Larimer F."/>
            <person name="Land M."/>
            <person name="Hauser L."/>
            <person name="Kyrpides N."/>
            <person name="Mikhailova N."/>
            <person name="Balakrishnan V."/>
            <person name="Glasner J."/>
            <person name="Perna N.T."/>
        </authorList>
    </citation>
    <scope>NUCLEOTIDE SEQUENCE [LARGE SCALE GENOMIC DNA]</scope>
    <source>
        <strain>PC1</strain>
    </source>
</reference>
<sequence length="84" mass="9737">MTDKIRTLQGRVVSDKMEKSMVVAIERFVKHPLYGKFIKRTTKLHVHDENNECGIGDVVEIRECRPLSKTKSWTLVRVVEKAIL</sequence>
<comment type="function">
    <text evidence="1">One of the primary rRNA binding proteins, it binds specifically to the 5'-end of 16S ribosomal RNA.</text>
</comment>
<comment type="subunit">
    <text evidence="1">Part of the 30S ribosomal subunit.</text>
</comment>
<comment type="similarity">
    <text evidence="1">Belongs to the universal ribosomal protein uS17 family.</text>
</comment>
<accession>C6DG65</accession>
<gene>
    <name evidence="1" type="primary">rpsQ</name>
    <name type="ordered locus">PC1_3813</name>
</gene>
<proteinExistence type="inferred from homology"/>
<dbReference type="EMBL" id="CP001657">
    <property type="protein sequence ID" value="ACT14828.1"/>
    <property type="molecule type" value="Genomic_DNA"/>
</dbReference>
<dbReference type="RefSeq" id="WP_011095505.1">
    <property type="nucleotide sequence ID" value="NC_012917.1"/>
</dbReference>
<dbReference type="SMR" id="C6DG65"/>
<dbReference type="STRING" id="561230.PC1_3813"/>
<dbReference type="GeneID" id="70909312"/>
<dbReference type="KEGG" id="pct:PC1_3813"/>
<dbReference type="eggNOG" id="COG0186">
    <property type="taxonomic scope" value="Bacteria"/>
</dbReference>
<dbReference type="HOGENOM" id="CLU_073626_1_1_6"/>
<dbReference type="OrthoDB" id="9811714at2"/>
<dbReference type="Proteomes" id="UP000002736">
    <property type="component" value="Chromosome"/>
</dbReference>
<dbReference type="GO" id="GO:0022627">
    <property type="term" value="C:cytosolic small ribosomal subunit"/>
    <property type="evidence" value="ECO:0007669"/>
    <property type="project" value="TreeGrafter"/>
</dbReference>
<dbReference type="GO" id="GO:0019843">
    <property type="term" value="F:rRNA binding"/>
    <property type="evidence" value="ECO:0007669"/>
    <property type="project" value="UniProtKB-UniRule"/>
</dbReference>
<dbReference type="GO" id="GO:0003735">
    <property type="term" value="F:structural constituent of ribosome"/>
    <property type="evidence" value="ECO:0007669"/>
    <property type="project" value="InterPro"/>
</dbReference>
<dbReference type="GO" id="GO:0006412">
    <property type="term" value="P:translation"/>
    <property type="evidence" value="ECO:0007669"/>
    <property type="project" value="UniProtKB-UniRule"/>
</dbReference>
<dbReference type="CDD" id="cd00364">
    <property type="entry name" value="Ribosomal_uS17"/>
    <property type="match status" value="1"/>
</dbReference>
<dbReference type="FunFam" id="2.40.50.140:FF:000014">
    <property type="entry name" value="30S ribosomal protein S17"/>
    <property type="match status" value="1"/>
</dbReference>
<dbReference type="Gene3D" id="2.40.50.140">
    <property type="entry name" value="Nucleic acid-binding proteins"/>
    <property type="match status" value="1"/>
</dbReference>
<dbReference type="HAMAP" id="MF_01345_B">
    <property type="entry name" value="Ribosomal_uS17_B"/>
    <property type="match status" value="1"/>
</dbReference>
<dbReference type="InterPro" id="IPR012340">
    <property type="entry name" value="NA-bd_OB-fold"/>
</dbReference>
<dbReference type="InterPro" id="IPR000266">
    <property type="entry name" value="Ribosomal_uS17"/>
</dbReference>
<dbReference type="InterPro" id="IPR019984">
    <property type="entry name" value="Ribosomal_uS17_bact/chlr"/>
</dbReference>
<dbReference type="InterPro" id="IPR019979">
    <property type="entry name" value="Ribosomal_uS17_CS"/>
</dbReference>
<dbReference type="NCBIfam" id="NF004123">
    <property type="entry name" value="PRK05610.1"/>
    <property type="match status" value="1"/>
</dbReference>
<dbReference type="NCBIfam" id="TIGR03635">
    <property type="entry name" value="uS17_bact"/>
    <property type="match status" value="1"/>
</dbReference>
<dbReference type="PANTHER" id="PTHR10744">
    <property type="entry name" value="40S RIBOSOMAL PROTEIN S11 FAMILY MEMBER"/>
    <property type="match status" value="1"/>
</dbReference>
<dbReference type="PANTHER" id="PTHR10744:SF1">
    <property type="entry name" value="SMALL RIBOSOMAL SUBUNIT PROTEIN US17M"/>
    <property type="match status" value="1"/>
</dbReference>
<dbReference type="Pfam" id="PF00366">
    <property type="entry name" value="Ribosomal_S17"/>
    <property type="match status" value="1"/>
</dbReference>
<dbReference type="PRINTS" id="PR00973">
    <property type="entry name" value="RIBOSOMALS17"/>
</dbReference>
<dbReference type="SUPFAM" id="SSF50249">
    <property type="entry name" value="Nucleic acid-binding proteins"/>
    <property type="match status" value="1"/>
</dbReference>
<dbReference type="PROSITE" id="PS00056">
    <property type="entry name" value="RIBOSOMAL_S17"/>
    <property type="match status" value="1"/>
</dbReference>
<keyword id="KW-0687">Ribonucleoprotein</keyword>
<keyword id="KW-0689">Ribosomal protein</keyword>
<keyword id="KW-0694">RNA-binding</keyword>
<keyword id="KW-0699">rRNA-binding</keyword>
<feature type="chain" id="PRO_1000214793" description="Small ribosomal subunit protein uS17">
    <location>
        <begin position="1"/>
        <end position="84"/>
    </location>
</feature>